<accession>P9WJ09</accession>
<accession>L0T617</accession>
<accession>O07225</accession>
<accession>Q7DA27</accession>
<gene>
    <name type="ordered locus">Rv0298</name>
</gene>
<comment type="function">
    <text evidence="1">Antitoxin component of a type II toxin-antitoxin (TA) system. Upon expression in M.smegmatis neutralizes the effect of cognate toxin Rv0299.</text>
</comment>
<evidence type="ECO:0000269" key="1">
    <source>
    </source>
</evidence>
<evidence type="ECO:0007829" key="2">
    <source>
        <dbReference type="PDB" id="8U12"/>
    </source>
</evidence>
<organism>
    <name type="scientific">Mycobacterium tuberculosis (strain ATCC 25618 / H37Rv)</name>
    <dbReference type="NCBI Taxonomy" id="83332"/>
    <lineage>
        <taxon>Bacteria</taxon>
        <taxon>Bacillati</taxon>
        <taxon>Actinomycetota</taxon>
        <taxon>Actinomycetes</taxon>
        <taxon>Mycobacteriales</taxon>
        <taxon>Mycobacteriaceae</taxon>
        <taxon>Mycobacterium</taxon>
        <taxon>Mycobacterium tuberculosis complex</taxon>
    </lineage>
</organism>
<feature type="chain" id="PRO_0000406884" description="Antitoxin Rv0298">
    <location>
        <begin position="1"/>
        <end position="75"/>
    </location>
</feature>
<feature type="strand" evidence="2">
    <location>
        <begin position="3"/>
        <end position="11"/>
    </location>
</feature>
<feature type="helix" evidence="2">
    <location>
        <begin position="12"/>
        <end position="25"/>
    </location>
</feature>
<feature type="helix" evidence="2">
    <location>
        <begin position="29"/>
        <end position="48"/>
    </location>
</feature>
<keyword id="KW-0002">3D-structure</keyword>
<keyword id="KW-1185">Reference proteome</keyword>
<keyword id="KW-1277">Toxin-antitoxin system</keyword>
<protein>
    <recommendedName>
        <fullName>Antitoxin Rv0298</fullName>
    </recommendedName>
</protein>
<proteinExistence type="evidence at protein level"/>
<name>Y298_MYCTU</name>
<sequence>MTKEKISVTVDAAVLAAIDADARAAGLNRSEMIEQALRNEHLRVALRDYTAKTVPALDIDAYAQRVYQANRAAGS</sequence>
<dbReference type="EMBL" id="AL123456">
    <property type="protein sequence ID" value="CCP43028.1"/>
    <property type="molecule type" value="Genomic_DNA"/>
</dbReference>
<dbReference type="PIR" id="C70523">
    <property type="entry name" value="C70523"/>
</dbReference>
<dbReference type="RefSeq" id="NP_214812.1">
    <property type="nucleotide sequence ID" value="NC_000962.3"/>
</dbReference>
<dbReference type="RefSeq" id="WP_003401555.1">
    <property type="nucleotide sequence ID" value="NZ_NVQJ01000026.1"/>
</dbReference>
<dbReference type="PDB" id="8U12">
    <property type="method" value="X-ray"/>
    <property type="resolution" value="1.60 A"/>
    <property type="chains" value="A/B/C/D/E/F/G/H=1-75"/>
</dbReference>
<dbReference type="PDB" id="8YPJ">
    <property type="method" value="X-ray"/>
    <property type="resolution" value="1.91 A"/>
    <property type="chains" value="A/B=1-75"/>
</dbReference>
<dbReference type="PDBsum" id="8U12"/>
<dbReference type="PDBsum" id="8YPJ"/>
<dbReference type="SMR" id="P9WJ09"/>
<dbReference type="STRING" id="83332.Rv0298"/>
<dbReference type="PaxDb" id="83332-Rv0298"/>
<dbReference type="DNASU" id="886590"/>
<dbReference type="GeneID" id="886590"/>
<dbReference type="KEGG" id="mtu:Rv0298"/>
<dbReference type="KEGG" id="mtv:RVBD_0298"/>
<dbReference type="TubercuList" id="Rv0298"/>
<dbReference type="eggNOG" id="ENOG5031VVX">
    <property type="taxonomic scope" value="Bacteria"/>
</dbReference>
<dbReference type="InParanoid" id="P9WJ09"/>
<dbReference type="OrthoDB" id="4748025at2"/>
<dbReference type="Proteomes" id="UP000001584">
    <property type="component" value="Chromosome"/>
</dbReference>
<dbReference type="GO" id="GO:0045927">
    <property type="term" value="P:positive regulation of growth"/>
    <property type="evidence" value="ECO:0000315"/>
    <property type="project" value="MTBBASE"/>
</dbReference>
<dbReference type="GO" id="GO:0006355">
    <property type="term" value="P:regulation of DNA-templated transcription"/>
    <property type="evidence" value="ECO:0007669"/>
    <property type="project" value="InterPro"/>
</dbReference>
<dbReference type="InterPro" id="IPR002145">
    <property type="entry name" value="CopG"/>
</dbReference>
<dbReference type="Pfam" id="PF01402">
    <property type="entry name" value="RHH_1"/>
    <property type="match status" value="1"/>
</dbReference>
<reference key="1">
    <citation type="journal article" date="1998" name="Nature">
        <title>Deciphering the biology of Mycobacterium tuberculosis from the complete genome sequence.</title>
        <authorList>
            <person name="Cole S.T."/>
            <person name="Brosch R."/>
            <person name="Parkhill J."/>
            <person name="Garnier T."/>
            <person name="Churcher C.M."/>
            <person name="Harris D.E."/>
            <person name="Gordon S.V."/>
            <person name="Eiglmeier K."/>
            <person name="Gas S."/>
            <person name="Barry C.E. III"/>
            <person name="Tekaia F."/>
            <person name="Badcock K."/>
            <person name="Basham D."/>
            <person name="Brown D."/>
            <person name="Chillingworth T."/>
            <person name="Connor R."/>
            <person name="Davies R.M."/>
            <person name="Devlin K."/>
            <person name="Feltwell T."/>
            <person name="Gentles S."/>
            <person name="Hamlin N."/>
            <person name="Holroyd S."/>
            <person name="Hornsby T."/>
            <person name="Jagels K."/>
            <person name="Krogh A."/>
            <person name="McLean J."/>
            <person name="Moule S."/>
            <person name="Murphy L.D."/>
            <person name="Oliver S."/>
            <person name="Osborne J."/>
            <person name="Quail M.A."/>
            <person name="Rajandream M.A."/>
            <person name="Rogers J."/>
            <person name="Rutter S."/>
            <person name="Seeger K."/>
            <person name="Skelton S."/>
            <person name="Squares S."/>
            <person name="Squares R."/>
            <person name="Sulston J.E."/>
            <person name="Taylor K."/>
            <person name="Whitehead S."/>
            <person name="Barrell B.G."/>
        </authorList>
    </citation>
    <scope>NUCLEOTIDE SEQUENCE [LARGE SCALE GENOMIC DNA]</scope>
    <source>
        <strain>ATCC 25618 / H37Rv</strain>
    </source>
</reference>
<reference key="2">
    <citation type="journal article" date="2009" name="PLoS Genet.">
        <title>Comprehensive functional analysis of Mycobacterium tuberculosis toxin-antitoxin systems: implications for pathogenesis, stress responses, and evolution.</title>
        <authorList>
            <person name="Ramage H.R."/>
            <person name="Connolly L.E."/>
            <person name="Cox J.S."/>
        </authorList>
    </citation>
    <scope>EXPRESSION IN M.SMEGMATIS</scope>
    <scope>FUNCTION AS AN ANTITOXIN</scope>
    <source>
        <strain>ATCC 35801 / TMC 107 / Erdman</strain>
    </source>
</reference>
<reference key="3">
    <citation type="journal article" date="2011" name="Mol. Cell. Proteomics">
        <title>Proteogenomic analysis of Mycobacterium tuberculosis by high resolution mass spectrometry.</title>
        <authorList>
            <person name="Kelkar D.S."/>
            <person name="Kumar D."/>
            <person name="Kumar P."/>
            <person name="Balakrishnan L."/>
            <person name="Muthusamy B."/>
            <person name="Yadav A.K."/>
            <person name="Shrivastava P."/>
            <person name="Marimuthu A."/>
            <person name="Anand S."/>
            <person name="Sundaram H."/>
            <person name="Kingsbury R."/>
            <person name="Harsha H.C."/>
            <person name="Nair B."/>
            <person name="Prasad T.S."/>
            <person name="Chauhan D.S."/>
            <person name="Katoch K."/>
            <person name="Katoch V.M."/>
            <person name="Kumar P."/>
            <person name="Chaerkady R."/>
            <person name="Ramachandran S."/>
            <person name="Dash D."/>
            <person name="Pandey A."/>
        </authorList>
    </citation>
    <scope>IDENTIFICATION BY MASS SPECTROMETRY [LARGE SCALE ANALYSIS]</scope>
    <source>
        <strain>ATCC 25618 / H37Rv</strain>
    </source>
</reference>